<feature type="chain" id="PRO_0000367289" description="Piwi-like protein 2">
    <location>
        <begin position="1"/>
        <end position="949"/>
    </location>
</feature>
<feature type="domain" description="PAZ" evidence="5">
    <location>
        <begin position="366"/>
        <end position="478"/>
    </location>
</feature>
<feature type="domain" description="Piwi" evidence="6">
    <location>
        <begin position="644"/>
        <end position="935"/>
    </location>
</feature>
<feature type="region of interest" description="Disordered" evidence="7">
    <location>
        <begin position="1"/>
        <end position="125"/>
    </location>
</feature>
<feature type="compositionally biased region" description="Polar residues" evidence="7">
    <location>
        <begin position="115"/>
        <end position="125"/>
    </location>
</feature>
<feature type="active site" evidence="2">
    <location>
        <position position="721"/>
    </location>
</feature>
<feature type="active site" evidence="2">
    <location>
        <position position="759"/>
    </location>
</feature>
<feature type="active site" evidence="2">
    <location>
        <position position="791"/>
    </location>
</feature>
<feature type="active site" evidence="2">
    <location>
        <position position="924"/>
    </location>
</feature>
<comment type="function">
    <text evidence="3">Endoribonuclease that plays a central role during spermatogenesis by repressing transposable elements and preventing their mobilization, which is essential for the germline integrity. Plays an essential role in meiotic differentiation of spermatocytes, germ cell differentiation and in self-renewal of spermatogonial stem cells. Acts via the piRNA metabolic process, which mediates the repression of transposable elements during meiosis by forming complexes composed of piRNAs and Piwi proteins and govern the methylation and subsequent repression of transposons. During piRNA biosynthesis, plays a key role in the piRNA amplification loop, also named ping-pong amplification cycle, by acting as a 'slicer-competent' piRNA endoribonuclease that cleaves primary piRNAs, which are then loaded onto 'slicer-incompetent' piwil4. Piwil2 slicing produces a pre-miRNA intermediate, which is then processed in mature piRNAs, and as well as a 16 nucleotide by-product that is degraded. Required for piwil4/miwi2 nuclear localization and association with secondary piRNAs antisense. Represses circadian rhythms by promoting the stability and activity of core clock components BMAL1 and CLOCK (By similarity).</text>
</comment>
<comment type="cofactor">
    <cofactor evidence="4">
        <name>Mg(2+)</name>
        <dbReference type="ChEBI" id="CHEBI:18420"/>
    </cofactor>
</comment>
<comment type="subunit">
    <text evidence="3">Component of the PET complex.</text>
</comment>
<comment type="interaction">
    <interactant intactId="EBI-7191401">
        <id>A8KBF3</id>
    </interactant>
    <interactant intactId="EBI-7191347">
        <id>Q98SP8</id>
        <label>epabp-a</label>
    </interactant>
    <organismsDiffer>true</organismsDiffer>
    <experiments>3</experiments>
</comment>
<comment type="interaction">
    <interactant intactId="EBI-7191401">
        <id>A8KBF3</id>
    </interactant>
    <interactant intactId="EBI-7191476">
        <id>Q7ZYV9</id>
        <label>sympk</label>
    </interactant>
    <organismsDiffer>true</organismsDiffer>
    <experiments>3</experiments>
</comment>
<comment type="interaction">
    <interactant intactId="EBI-7191401">
        <id>A8KBF3</id>
    </interactant>
    <interactant intactId="EBI-7191460">
        <id>Q90WE3</id>
        <label>tdrd6</label>
    </interactant>
    <organismsDiffer>true</organismsDiffer>
    <experiments>4</experiments>
</comment>
<comment type="subcellular location">
    <subcellularLocation>
        <location evidence="1">Cytoplasm</location>
    </subcellularLocation>
    <subcellularLocation>
        <location evidence="1">Nucleus</location>
    </subcellularLocation>
    <text evidence="3">Probable component of the meiotic nuage, also named P granule, a germ-cell-specific organelle required to repress transposon activity during meiosis.</text>
</comment>
<comment type="tissue specificity">
    <text evidence="8">Expressed in oocytes, testis and liver (at protein level).</text>
</comment>
<comment type="PTM">
    <text evidence="8">Methylated on arginine residues; required for the interaction with Tudor domain-containing protein and subsequent localization to the meiotic nuage, also named P granule.</text>
</comment>
<comment type="similarity">
    <text evidence="9">Belongs to the argonaute family. Piwi subfamily.</text>
</comment>
<protein>
    <recommendedName>
        <fullName>Piwi-like protein 2</fullName>
        <ecNumber evidence="3">3.1.26.-</ecNumber>
    </recommendedName>
</protein>
<proteinExistence type="evidence at protein level"/>
<dbReference type="EC" id="3.1.26.-" evidence="3"/>
<dbReference type="EMBL" id="BC154090">
    <property type="protein sequence ID" value="AAI54091.1"/>
    <property type="molecule type" value="mRNA"/>
</dbReference>
<dbReference type="RefSeq" id="NP_001106470.1">
    <property type="nucleotide sequence ID" value="NM_001112999.1"/>
</dbReference>
<dbReference type="SMR" id="A8KBF3"/>
<dbReference type="FunCoup" id="A8KBF3">
    <property type="interactions" value="135"/>
</dbReference>
<dbReference type="IntAct" id="A8KBF3">
    <property type="interactions" value="7"/>
</dbReference>
<dbReference type="MINT" id="A8KBF3"/>
<dbReference type="STRING" id="8364.ENSXETP00000017761"/>
<dbReference type="PaxDb" id="8364-ENSXETP00000023096"/>
<dbReference type="GeneID" id="100127654"/>
<dbReference type="KEGG" id="xtr:100127654"/>
<dbReference type="AGR" id="Xenbase:XB-GENE-982236"/>
<dbReference type="CTD" id="55124"/>
<dbReference type="Xenbase" id="XB-GENE-982236">
    <property type="gene designation" value="piwil2"/>
</dbReference>
<dbReference type="eggNOG" id="KOG1042">
    <property type="taxonomic scope" value="Eukaryota"/>
</dbReference>
<dbReference type="InParanoid" id="A8KBF3"/>
<dbReference type="OrthoDB" id="445936at2759"/>
<dbReference type="Proteomes" id="UP000008143">
    <property type="component" value="Chromosome 3"/>
</dbReference>
<dbReference type="GO" id="GO:0005737">
    <property type="term" value="C:cytoplasm"/>
    <property type="evidence" value="ECO:0000250"/>
    <property type="project" value="UniProtKB"/>
</dbReference>
<dbReference type="GO" id="GO:0005634">
    <property type="term" value="C:nucleus"/>
    <property type="evidence" value="ECO:0007669"/>
    <property type="project" value="UniProtKB-SubCell"/>
</dbReference>
<dbReference type="GO" id="GO:0043186">
    <property type="term" value="C:P granule"/>
    <property type="evidence" value="ECO:0000250"/>
    <property type="project" value="UniProtKB"/>
</dbReference>
<dbReference type="GO" id="GO:1990923">
    <property type="term" value="C:PET complex"/>
    <property type="evidence" value="ECO:0000250"/>
    <property type="project" value="UniProtKB"/>
</dbReference>
<dbReference type="GO" id="GO:0071546">
    <property type="term" value="C:pi-body"/>
    <property type="evidence" value="ECO:0000250"/>
    <property type="project" value="UniProtKB"/>
</dbReference>
<dbReference type="GO" id="GO:0046872">
    <property type="term" value="F:metal ion binding"/>
    <property type="evidence" value="ECO:0007669"/>
    <property type="project" value="UniProtKB-KW"/>
</dbReference>
<dbReference type="GO" id="GO:0034584">
    <property type="term" value="F:piRNA binding"/>
    <property type="evidence" value="ECO:0000250"/>
    <property type="project" value="UniProtKB"/>
</dbReference>
<dbReference type="GO" id="GO:0004521">
    <property type="term" value="F:RNA endonuclease activity"/>
    <property type="evidence" value="ECO:0000250"/>
    <property type="project" value="UniProtKB"/>
</dbReference>
<dbReference type="GO" id="GO:0030154">
    <property type="term" value="P:cell differentiation"/>
    <property type="evidence" value="ECO:0007669"/>
    <property type="project" value="UniProtKB-KW"/>
</dbReference>
<dbReference type="GO" id="GO:0007276">
    <property type="term" value="P:gamete generation"/>
    <property type="evidence" value="ECO:0000250"/>
    <property type="project" value="UniProtKB"/>
</dbReference>
<dbReference type="GO" id="GO:0030718">
    <property type="term" value="P:germ-line stem cell population maintenance"/>
    <property type="evidence" value="ECO:0000250"/>
    <property type="project" value="UniProtKB"/>
</dbReference>
<dbReference type="GO" id="GO:0051321">
    <property type="term" value="P:meiotic cell cycle"/>
    <property type="evidence" value="ECO:0000250"/>
    <property type="project" value="UniProtKB"/>
</dbReference>
<dbReference type="GO" id="GO:0006417">
    <property type="term" value="P:regulation of translation"/>
    <property type="evidence" value="ECO:0007669"/>
    <property type="project" value="UniProtKB-KW"/>
</dbReference>
<dbReference type="GO" id="GO:0031047">
    <property type="term" value="P:regulatory ncRNA-mediated gene silencing"/>
    <property type="evidence" value="ECO:0000250"/>
    <property type="project" value="UniProtKB"/>
</dbReference>
<dbReference type="GO" id="GO:0048511">
    <property type="term" value="P:rhythmic process"/>
    <property type="evidence" value="ECO:0007669"/>
    <property type="project" value="UniProtKB-KW"/>
</dbReference>
<dbReference type="GO" id="GO:0007283">
    <property type="term" value="P:spermatogenesis"/>
    <property type="evidence" value="ECO:0000250"/>
    <property type="project" value="UniProtKB"/>
</dbReference>
<dbReference type="GO" id="GO:0141005">
    <property type="term" value="P:transposable element silencing by heterochromatin formation"/>
    <property type="evidence" value="ECO:0000250"/>
    <property type="project" value="UniProtKB"/>
</dbReference>
<dbReference type="GO" id="GO:0141196">
    <property type="term" value="P:transposable element silencing by piRNA-mediated DNA methylation"/>
    <property type="evidence" value="ECO:0000250"/>
    <property type="project" value="UniProtKB"/>
</dbReference>
<dbReference type="CDD" id="cd02845">
    <property type="entry name" value="PAZ_piwi_like"/>
    <property type="match status" value="1"/>
</dbReference>
<dbReference type="CDD" id="cd04658">
    <property type="entry name" value="Piwi_piwi-like_Euk"/>
    <property type="match status" value="1"/>
</dbReference>
<dbReference type="FunFam" id="3.40.50.2300:FF:000141">
    <property type="entry name" value="piwi-like protein 2 isoform X1"/>
    <property type="match status" value="1"/>
</dbReference>
<dbReference type="FunFam" id="3.30.420.10:FF:000014">
    <property type="entry name" value="Piwi-like RNA-mediated gene silencing 1"/>
    <property type="match status" value="1"/>
</dbReference>
<dbReference type="FunFam" id="2.170.260.10:FF:000003">
    <property type="entry name" value="Piwi-like RNA-mediated gene silencing 2"/>
    <property type="match status" value="1"/>
</dbReference>
<dbReference type="Gene3D" id="3.40.50.2300">
    <property type="match status" value="1"/>
</dbReference>
<dbReference type="Gene3D" id="2.170.260.10">
    <property type="entry name" value="paz domain"/>
    <property type="match status" value="1"/>
</dbReference>
<dbReference type="Gene3D" id="3.30.420.10">
    <property type="entry name" value="Ribonuclease H-like superfamily/Ribonuclease H"/>
    <property type="match status" value="1"/>
</dbReference>
<dbReference type="InterPro" id="IPR014811">
    <property type="entry name" value="ArgoL1"/>
</dbReference>
<dbReference type="InterPro" id="IPR003100">
    <property type="entry name" value="PAZ_dom"/>
</dbReference>
<dbReference type="InterPro" id="IPR036085">
    <property type="entry name" value="PAZ_dom_sf"/>
</dbReference>
<dbReference type="InterPro" id="IPR003165">
    <property type="entry name" value="Piwi"/>
</dbReference>
<dbReference type="InterPro" id="IPR012337">
    <property type="entry name" value="RNaseH-like_sf"/>
</dbReference>
<dbReference type="InterPro" id="IPR036397">
    <property type="entry name" value="RNaseH_sf"/>
</dbReference>
<dbReference type="PANTHER" id="PTHR22891">
    <property type="entry name" value="EUKARYOTIC TRANSLATION INITIATION FACTOR 2C"/>
    <property type="match status" value="1"/>
</dbReference>
<dbReference type="Pfam" id="PF08699">
    <property type="entry name" value="ArgoL1"/>
    <property type="match status" value="1"/>
</dbReference>
<dbReference type="Pfam" id="PF02170">
    <property type="entry name" value="PAZ"/>
    <property type="match status" value="1"/>
</dbReference>
<dbReference type="Pfam" id="PF02171">
    <property type="entry name" value="Piwi"/>
    <property type="match status" value="1"/>
</dbReference>
<dbReference type="Pfam" id="PF23278">
    <property type="entry name" value="Piwi_N"/>
    <property type="match status" value="1"/>
</dbReference>
<dbReference type="SMART" id="SM01163">
    <property type="entry name" value="DUF1785"/>
    <property type="match status" value="1"/>
</dbReference>
<dbReference type="SMART" id="SM00949">
    <property type="entry name" value="PAZ"/>
    <property type="match status" value="1"/>
</dbReference>
<dbReference type="SMART" id="SM00950">
    <property type="entry name" value="Piwi"/>
    <property type="match status" value="1"/>
</dbReference>
<dbReference type="SUPFAM" id="SSF101690">
    <property type="entry name" value="PAZ domain"/>
    <property type="match status" value="1"/>
</dbReference>
<dbReference type="SUPFAM" id="SSF53098">
    <property type="entry name" value="Ribonuclease H-like"/>
    <property type="match status" value="1"/>
</dbReference>
<dbReference type="PROSITE" id="PS50821">
    <property type="entry name" value="PAZ"/>
    <property type="match status" value="1"/>
</dbReference>
<dbReference type="PROSITE" id="PS50822">
    <property type="entry name" value="PIWI"/>
    <property type="match status" value="1"/>
</dbReference>
<accession>A8KBF3</accession>
<keyword id="KW-0090">Biological rhythms</keyword>
<keyword id="KW-0963">Cytoplasm</keyword>
<keyword id="KW-0217">Developmental protein</keyword>
<keyword id="KW-0221">Differentiation</keyword>
<keyword id="KW-0255">Endonuclease</keyword>
<keyword id="KW-0378">Hydrolase</keyword>
<keyword id="KW-0469">Meiosis</keyword>
<keyword id="KW-0479">Metal-binding</keyword>
<keyword id="KW-0488">Methylation</keyword>
<keyword id="KW-0540">Nuclease</keyword>
<keyword id="KW-0539">Nucleus</keyword>
<keyword id="KW-1185">Reference proteome</keyword>
<keyword id="KW-0694">RNA-binding</keyword>
<keyword id="KW-0943">RNA-mediated gene silencing</keyword>
<keyword id="KW-0810">Translation regulation</keyword>
<gene>
    <name type="primary">piwil2</name>
</gene>
<organism>
    <name type="scientific">Xenopus tropicalis</name>
    <name type="common">Western clawed frog</name>
    <name type="synonym">Silurana tropicalis</name>
    <dbReference type="NCBI Taxonomy" id="8364"/>
    <lineage>
        <taxon>Eukaryota</taxon>
        <taxon>Metazoa</taxon>
        <taxon>Chordata</taxon>
        <taxon>Craniata</taxon>
        <taxon>Vertebrata</taxon>
        <taxon>Euteleostomi</taxon>
        <taxon>Amphibia</taxon>
        <taxon>Batrachia</taxon>
        <taxon>Anura</taxon>
        <taxon>Pipoidea</taxon>
        <taxon>Pipidae</taxon>
        <taxon>Xenopodinae</taxon>
        <taxon>Xenopus</taxon>
        <taxon>Silurana</taxon>
    </lineage>
</organism>
<evidence type="ECO:0000250" key="1">
    <source>
        <dbReference type="UniProtKB" id="A2CEI6"/>
    </source>
</evidence>
<evidence type="ECO:0000250" key="2">
    <source>
        <dbReference type="UniProtKB" id="A8D8P8"/>
    </source>
</evidence>
<evidence type="ECO:0000250" key="3">
    <source>
        <dbReference type="UniProtKB" id="Q8CDG1"/>
    </source>
</evidence>
<evidence type="ECO:0000250" key="4">
    <source>
        <dbReference type="UniProtKB" id="Q9JMB7"/>
    </source>
</evidence>
<evidence type="ECO:0000255" key="5">
    <source>
        <dbReference type="PROSITE-ProRule" id="PRU00142"/>
    </source>
</evidence>
<evidence type="ECO:0000255" key="6">
    <source>
        <dbReference type="PROSITE-ProRule" id="PRU00150"/>
    </source>
</evidence>
<evidence type="ECO:0000256" key="7">
    <source>
        <dbReference type="SAM" id="MobiDB-lite"/>
    </source>
</evidence>
<evidence type="ECO:0000269" key="8">
    <source>
    </source>
</evidence>
<evidence type="ECO:0000305" key="9"/>
<reference key="1">
    <citation type="submission" date="2007-10" db="EMBL/GenBank/DDBJ databases">
        <authorList>
            <consortium name="NIH - Xenopus Gene Collection (XGC) project"/>
        </authorList>
    </citation>
    <scope>NUCLEOTIDE SEQUENCE [LARGE SCALE MRNA]</scope>
    <source>
        <tissue>Testis</tissue>
    </source>
</reference>
<reference key="2">
    <citation type="journal article" date="2009" name="Nat. Cell Biol.">
        <title>Arginine methylation of Piwi proteins catalysed by dPRMT5 is required for Ago3 and Aub stability.</title>
        <authorList>
            <person name="Kirino Y."/>
            <person name="Kim N."/>
            <person name="de Planell-Saguer M."/>
            <person name="Khandros E."/>
            <person name="Chiorean S."/>
            <person name="Klein P.S."/>
            <person name="Rigoutsos I."/>
            <person name="Jongens T.A."/>
            <person name="Mourelatos Z."/>
        </authorList>
    </citation>
    <scope>IDENTIFICATION BY MASS SPECTROMETRY</scope>
    <scope>RNA-BINDING</scope>
    <scope>TISSUE SPECIFICITY</scope>
    <scope>METHYLATION</scope>
</reference>
<name>PIWL2_XENTR</name>
<sequence length="949" mass="106966">MDPTRPPFRGSPFHTPLGVRPPVLETKEEGPHGRAVLLPRGRALLGASAPSSDTTQRDPSDSRNVLPALFRGMGIETKPSGIPGRGGPVFGRGFLSTMSSGDGPDQPLSEPSIRPSLSTRVQQASDFSTERVALGRARFPIPPVSMEKPHVPTGRGLLFPSVLPTLTSDPVPKESPIATLQIEKEEKWEPLPKKGSKGSPCQLGLNLIKINFQNEAVYQYHVTFTPIVECRSMRFGMMKDHRSVTGPVTAFDGSILYLPVKLAQTVELESERRTDGQKIKITIQMTKILDPSSDLCLPFYNVVMRRVFKILDLKLVGRNFYDPASSTVLQQYRLQVWPGYAANIRKTDGGLFLLVDITHKIIRSDSVLDIMNILYQQSPENFQDEVTKQLVGSIVITRYNNRTYRIDDIEWNMSPKDSFSMSDGSKISFIDYYSKNYGITVKELDQPLLLHRPSERKAPKGKALDIVLLLPELAFMTGIPEKMRKDFRAMKDLTQQIHLSPKQHHISLGKLLKRIESSADAKNELQRWGLFLDTDIHMTTGRILPIEKINLRNNSFPAGEDLNWNREVTREACRSSVHLLYWAMIYPKRASAQAQELSSMLERIGGPIGIRVNHPNCVELRDDRVETYARSIKSLLEGEGKVQLLVCLISGTRDDLYGAIKKLCCVQNPVPSQVINTRTISQPQKLRSIAQKILLQINCKLGGELWGVDIPLKSVMVIGMDVYHDPSRGMRSVLGFVASINSCLTAWYSRVVFQLPNQEIMDSLKLCLVAALQKFFEVNHSLPEKIVVYRDGVSDGQLNTVENYEIPQLQTCFQTFDNYNPRMVVIVVQKRVSTNLYSTATGQFLTPQPGTVIDHTVTNRKWIDFFLMSHHVRQGCGIPTHYICVMNTANLGPDHLQRLTFKLCHMYWNWPGTIRVPAPCKYAHKLAFLSGQFLHHEPSIKLCDKLFFL</sequence>